<sequence length="263" mass="28695">MTDILQEIIAHKREELVERQTRLGLAELQAAVALTAPPRNFVGAVRARMAQGQPAVIAEIKKASPSAGVIREDFNPVTIAQDYAAHGAACLSVLTDEHYFQGADLYLAAAREACPLPVLRKDFCIDPYQVWEARAIGADAILLIVAALSDAELQSLEATAQSLDLAVLVEVHDAAELQRALKLRTPLIGINNRDLRRFVTEIETTLKLLPEIPRERIVVTESGIRSREEVATLRAAGVGAFLVGEAFMRTAQPGDALQHLFFD</sequence>
<proteinExistence type="inferred from homology"/>
<organism>
    <name type="scientific">Acidithiobacillus ferrooxidans (strain ATCC 53993 / BNL-5-31)</name>
    <name type="common">Leptospirillum ferrooxidans (ATCC 53993)</name>
    <dbReference type="NCBI Taxonomy" id="380394"/>
    <lineage>
        <taxon>Bacteria</taxon>
        <taxon>Pseudomonadati</taxon>
        <taxon>Pseudomonadota</taxon>
        <taxon>Acidithiobacillia</taxon>
        <taxon>Acidithiobacillales</taxon>
        <taxon>Acidithiobacillaceae</taxon>
        <taxon>Acidithiobacillus</taxon>
    </lineage>
</organism>
<accession>B5ERI2</accession>
<dbReference type="EC" id="4.1.1.48" evidence="1"/>
<dbReference type="EMBL" id="CP001132">
    <property type="protein sequence ID" value="ACH85028.1"/>
    <property type="molecule type" value="Genomic_DNA"/>
</dbReference>
<dbReference type="RefSeq" id="WP_009567143.1">
    <property type="nucleotide sequence ID" value="NC_011206.1"/>
</dbReference>
<dbReference type="SMR" id="B5ERI2"/>
<dbReference type="GeneID" id="65282222"/>
<dbReference type="KEGG" id="afe:Lferr_2843"/>
<dbReference type="eggNOG" id="COG0134">
    <property type="taxonomic scope" value="Bacteria"/>
</dbReference>
<dbReference type="HOGENOM" id="CLU_034247_2_0_6"/>
<dbReference type="UniPathway" id="UPA00035">
    <property type="reaction ID" value="UER00043"/>
</dbReference>
<dbReference type="GO" id="GO:0004425">
    <property type="term" value="F:indole-3-glycerol-phosphate synthase activity"/>
    <property type="evidence" value="ECO:0007669"/>
    <property type="project" value="UniProtKB-UniRule"/>
</dbReference>
<dbReference type="GO" id="GO:0004640">
    <property type="term" value="F:phosphoribosylanthranilate isomerase activity"/>
    <property type="evidence" value="ECO:0007669"/>
    <property type="project" value="TreeGrafter"/>
</dbReference>
<dbReference type="GO" id="GO:0000162">
    <property type="term" value="P:L-tryptophan biosynthetic process"/>
    <property type="evidence" value="ECO:0007669"/>
    <property type="project" value="UniProtKB-UniRule"/>
</dbReference>
<dbReference type="CDD" id="cd00331">
    <property type="entry name" value="IGPS"/>
    <property type="match status" value="1"/>
</dbReference>
<dbReference type="FunFam" id="3.20.20.70:FF:000024">
    <property type="entry name" value="Indole-3-glycerol phosphate synthase"/>
    <property type="match status" value="1"/>
</dbReference>
<dbReference type="Gene3D" id="3.20.20.70">
    <property type="entry name" value="Aldolase class I"/>
    <property type="match status" value="1"/>
</dbReference>
<dbReference type="HAMAP" id="MF_00134_B">
    <property type="entry name" value="IGPS_B"/>
    <property type="match status" value="1"/>
</dbReference>
<dbReference type="InterPro" id="IPR013785">
    <property type="entry name" value="Aldolase_TIM"/>
</dbReference>
<dbReference type="InterPro" id="IPR045186">
    <property type="entry name" value="Indole-3-glycerol_P_synth"/>
</dbReference>
<dbReference type="InterPro" id="IPR013798">
    <property type="entry name" value="Indole-3-glycerol_P_synth_dom"/>
</dbReference>
<dbReference type="InterPro" id="IPR001468">
    <property type="entry name" value="Indole-3-GlycerolPSynthase_CS"/>
</dbReference>
<dbReference type="InterPro" id="IPR011060">
    <property type="entry name" value="RibuloseP-bd_barrel"/>
</dbReference>
<dbReference type="NCBIfam" id="NF001370">
    <property type="entry name" value="PRK00278.1-2"/>
    <property type="match status" value="1"/>
</dbReference>
<dbReference type="NCBIfam" id="NF001373">
    <property type="entry name" value="PRK00278.1-6"/>
    <property type="match status" value="1"/>
</dbReference>
<dbReference type="NCBIfam" id="NF001377">
    <property type="entry name" value="PRK00278.2-4"/>
    <property type="match status" value="1"/>
</dbReference>
<dbReference type="PANTHER" id="PTHR22854:SF2">
    <property type="entry name" value="INDOLE-3-GLYCEROL-PHOSPHATE SYNTHASE"/>
    <property type="match status" value="1"/>
</dbReference>
<dbReference type="PANTHER" id="PTHR22854">
    <property type="entry name" value="TRYPTOPHAN BIOSYNTHESIS PROTEIN"/>
    <property type="match status" value="1"/>
</dbReference>
<dbReference type="Pfam" id="PF00218">
    <property type="entry name" value="IGPS"/>
    <property type="match status" value="1"/>
</dbReference>
<dbReference type="SUPFAM" id="SSF51366">
    <property type="entry name" value="Ribulose-phoshate binding barrel"/>
    <property type="match status" value="1"/>
</dbReference>
<dbReference type="PROSITE" id="PS00614">
    <property type="entry name" value="IGPS"/>
    <property type="match status" value="1"/>
</dbReference>
<keyword id="KW-0028">Amino-acid biosynthesis</keyword>
<keyword id="KW-0057">Aromatic amino acid biosynthesis</keyword>
<keyword id="KW-0210">Decarboxylase</keyword>
<keyword id="KW-0456">Lyase</keyword>
<keyword id="KW-0822">Tryptophan biosynthesis</keyword>
<name>TRPC_ACIF5</name>
<comment type="catalytic activity">
    <reaction evidence="1">
        <text>1-(2-carboxyphenylamino)-1-deoxy-D-ribulose 5-phosphate + H(+) = (1S,2R)-1-C-(indol-3-yl)glycerol 3-phosphate + CO2 + H2O</text>
        <dbReference type="Rhea" id="RHEA:23476"/>
        <dbReference type="ChEBI" id="CHEBI:15377"/>
        <dbReference type="ChEBI" id="CHEBI:15378"/>
        <dbReference type="ChEBI" id="CHEBI:16526"/>
        <dbReference type="ChEBI" id="CHEBI:58613"/>
        <dbReference type="ChEBI" id="CHEBI:58866"/>
        <dbReference type="EC" id="4.1.1.48"/>
    </reaction>
</comment>
<comment type="pathway">
    <text evidence="1">Amino-acid biosynthesis; L-tryptophan biosynthesis; L-tryptophan from chorismate: step 4/5.</text>
</comment>
<comment type="similarity">
    <text evidence="1">Belongs to the TrpC family.</text>
</comment>
<evidence type="ECO:0000255" key="1">
    <source>
        <dbReference type="HAMAP-Rule" id="MF_00134"/>
    </source>
</evidence>
<reference key="1">
    <citation type="submission" date="2008-08" db="EMBL/GenBank/DDBJ databases">
        <title>Complete sequence of Acidithiobacillus ferrooxidans ATCC 53993.</title>
        <authorList>
            <person name="Lucas S."/>
            <person name="Copeland A."/>
            <person name="Lapidus A."/>
            <person name="Glavina del Rio T."/>
            <person name="Dalin E."/>
            <person name="Tice H."/>
            <person name="Bruce D."/>
            <person name="Goodwin L."/>
            <person name="Pitluck S."/>
            <person name="Sims D."/>
            <person name="Brettin T."/>
            <person name="Detter J.C."/>
            <person name="Han C."/>
            <person name="Kuske C.R."/>
            <person name="Larimer F."/>
            <person name="Land M."/>
            <person name="Hauser L."/>
            <person name="Kyrpides N."/>
            <person name="Lykidis A."/>
            <person name="Borole A.P."/>
        </authorList>
    </citation>
    <scope>NUCLEOTIDE SEQUENCE [LARGE SCALE GENOMIC DNA]</scope>
    <source>
        <strain>ATCC 53993 / BNL-5-31</strain>
    </source>
</reference>
<protein>
    <recommendedName>
        <fullName evidence="1">Indole-3-glycerol phosphate synthase</fullName>
        <shortName evidence="1">IGPS</shortName>
        <ecNumber evidence="1">4.1.1.48</ecNumber>
    </recommendedName>
</protein>
<gene>
    <name evidence="1" type="primary">trpC</name>
    <name type="ordered locus">Lferr_2843</name>
</gene>
<feature type="chain" id="PRO_1000095848" description="Indole-3-glycerol phosphate synthase">
    <location>
        <begin position="1"/>
        <end position="263"/>
    </location>
</feature>